<evidence type="ECO:0000250" key="1"/>
<evidence type="ECO:0000255" key="2">
    <source>
        <dbReference type="HAMAP-Rule" id="MF_00118"/>
    </source>
</evidence>
<organism>
    <name type="scientific">Corynebacterium jeikeium (strain K411)</name>
    <dbReference type="NCBI Taxonomy" id="306537"/>
    <lineage>
        <taxon>Bacteria</taxon>
        <taxon>Bacillati</taxon>
        <taxon>Actinomycetota</taxon>
        <taxon>Actinomycetes</taxon>
        <taxon>Mycobacteriales</taxon>
        <taxon>Corynebacteriaceae</taxon>
        <taxon>Corynebacterium</taxon>
    </lineage>
</organism>
<accession>Q4JT41</accession>
<protein>
    <recommendedName>
        <fullName evidence="2">Elongation factor Tu</fullName>
        <shortName evidence="2">EF-Tu</shortName>
        <ecNumber evidence="2">3.6.5.3</ecNumber>
    </recommendedName>
</protein>
<name>EFTU_CORJK</name>
<reference key="1">
    <citation type="journal article" date="2005" name="J. Bacteriol.">
        <title>Complete genome sequence and analysis of the multiresistant nosocomial pathogen Corynebacterium jeikeium K411, a lipid-requiring bacterium of the human skin flora.</title>
        <authorList>
            <person name="Tauch A."/>
            <person name="Kaiser O."/>
            <person name="Hain T."/>
            <person name="Goesmann A."/>
            <person name="Weisshaar B."/>
            <person name="Albersmeier A."/>
            <person name="Bekel T."/>
            <person name="Bischoff N."/>
            <person name="Brune I."/>
            <person name="Chakraborty T."/>
            <person name="Kalinowski J."/>
            <person name="Meyer F."/>
            <person name="Rupp O."/>
            <person name="Schneiker S."/>
            <person name="Viehoever P."/>
            <person name="Puehler A."/>
        </authorList>
    </citation>
    <scope>NUCLEOTIDE SEQUENCE [LARGE SCALE GENOMIC DNA]</scope>
    <source>
        <strain>K411</strain>
    </source>
</reference>
<keyword id="KW-0963">Cytoplasm</keyword>
<keyword id="KW-0251">Elongation factor</keyword>
<keyword id="KW-0342">GTP-binding</keyword>
<keyword id="KW-0378">Hydrolase</keyword>
<keyword id="KW-0460">Magnesium</keyword>
<keyword id="KW-0479">Metal-binding</keyword>
<keyword id="KW-0547">Nucleotide-binding</keyword>
<keyword id="KW-0648">Protein biosynthesis</keyword>
<keyword id="KW-1185">Reference proteome</keyword>
<sequence length="396" mass="43915">MAKAKFERSKPHVNIGTIGHVDHGKTTTTAAITKVLADKFPEANKSFAFDAIDKAPEEKERGITINISHVEYETEKRHYAHVDAPGHADYIKNMITGAAQMDGAILVVAATDGPMPQTREHVLLARQVGVPYILVALNKCDMVDDEELLELVEMEVRELLAEQDFDEEAPVVHISALKALEGDEKWANQILELMQACDESIPDPERETDKPFLMPVEDIFTITGRGTVVTGRVERGILNLNDEVEILGIREKSQKTTVTSIEMFNKLLDTAEAGDNAALLLRGLKREDVERGQIIAKPGEYTPHTEFEGSVYVLSKDEGGRHTPFFDNYRPQFYFRTTDVTGVVKLPEGTEMVMPGDNVDMSVTLIQPVAMDEGLRFAIREGGRTVGAGRVTKINK</sequence>
<gene>
    <name evidence="2" type="primary">tuf</name>
    <name type="ordered locus">jk1839</name>
</gene>
<comment type="function">
    <text evidence="2">GTP hydrolase that promotes the GTP-dependent binding of aminoacyl-tRNA to the A-site of ribosomes during protein biosynthesis.</text>
</comment>
<comment type="catalytic activity">
    <reaction evidence="2">
        <text>GTP + H2O = GDP + phosphate + H(+)</text>
        <dbReference type="Rhea" id="RHEA:19669"/>
        <dbReference type="ChEBI" id="CHEBI:15377"/>
        <dbReference type="ChEBI" id="CHEBI:15378"/>
        <dbReference type="ChEBI" id="CHEBI:37565"/>
        <dbReference type="ChEBI" id="CHEBI:43474"/>
        <dbReference type="ChEBI" id="CHEBI:58189"/>
        <dbReference type="EC" id="3.6.5.3"/>
    </reaction>
    <physiologicalReaction direction="left-to-right" evidence="2">
        <dbReference type="Rhea" id="RHEA:19670"/>
    </physiologicalReaction>
</comment>
<comment type="subunit">
    <text evidence="2">Monomer.</text>
</comment>
<comment type="subcellular location">
    <subcellularLocation>
        <location evidence="2">Cytoplasm</location>
    </subcellularLocation>
</comment>
<comment type="similarity">
    <text evidence="2">Belongs to the TRAFAC class translation factor GTPase superfamily. Classic translation factor GTPase family. EF-Tu/EF-1A subfamily.</text>
</comment>
<feature type="chain" id="PRO_1000015644" description="Elongation factor Tu">
    <location>
        <begin position="1"/>
        <end position="396"/>
    </location>
</feature>
<feature type="domain" description="tr-type G">
    <location>
        <begin position="10"/>
        <end position="205"/>
    </location>
</feature>
<feature type="region of interest" description="G1" evidence="1">
    <location>
        <begin position="19"/>
        <end position="26"/>
    </location>
</feature>
<feature type="region of interest" description="G2" evidence="1">
    <location>
        <begin position="62"/>
        <end position="66"/>
    </location>
</feature>
<feature type="region of interest" description="G3" evidence="1">
    <location>
        <begin position="83"/>
        <end position="86"/>
    </location>
</feature>
<feature type="region of interest" description="G4" evidence="1">
    <location>
        <begin position="138"/>
        <end position="141"/>
    </location>
</feature>
<feature type="region of interest" description="G5" evidence="1">
    <location>
        <begin position="175"/>
        <end position="177"/>
    </location>
</feature>
<feature type="binding site" evidence="2">
    <location>
        <begin position="19"/>
        <end position="26"/>
    </location>
    <ligand>
        <name>GTP</name>
        <dbReference type="ChEBI" id="CHEBI:37565"/>
    </ligand>
</feature>
<feature type="binding site" evidence="2">
    <location>
        <position position="26"/>
    </location>
    <ligand>
        <name>Mg(2+)</name>
        <dbReference type="ChEBI" id="CHEBI:18420"/>
    </ligand>
</feature>
<feature type="binding site" evidence="2">
    <location>
        <begin position="83"/>
        <end position="87"/>
    </location>
    <ligand>
        <name>GTP</name>
        <dbReference type="ChEBI" id="CHEBI:37565"/>
    </ligand>
</feature>
<feature type="binding site" evidence="2">
    <location>
        <begin position="138"/>
        <end position="141"/>
    </location>
    <ligand>
        <name>GTP</name>
        <dbReference type="ChEBI" id="CHEBI:37565"/>
    </ligand>
</feature>
<proteinExistence type="inferred from homology"/>
<dbReference type="EC" id="3.6.5.3" evidence="2"/>
<dbReference type="EMBL" id="CR931997">
    <property type="protein sequence ID" value="CAI38016.1"/>
    <property type="molecule type" value="Genomic_DNA"/>
</dbReference>
<dbReference type="RefSeq" id="WP_011274172.1">
    <property type="nucleotide sequence ID" value="NC_007164.1"/>
</dbReference>
<dbReference type="SMR" id="Q4JT41"/>
<dbReference type="STRING" id="306537.jk1839"/>
<dbReference type="KEGG" id="cjk:jk1839"/>
<dbReference type="PATRIC" id="fig|306537.10.peg.1862"/>
<dbReference type="eggNOG" id="COG0050">
    <property type="taxonomic scope" value="Bacteria"/>
</dbReference>
<dbReference type="HOGENOM" id="CLU_007265_0_1_11"/>
<dbReference type="OrthoDB" id="9803139at2"/>
<dbReference type="Proteomes" id="UP000000545">
    <property type="component" value="Chromosome"/>
</dbReference>
<dbReference type="GO" id="GO:0005829">
    <property type="term" value="C:cytosol"/>
    <property type="evidence" value="ECO:0007669"/>
    <property type="project" value="TreeGrafter"/>
</dbReference>
<dbReference type="GO" id="GO:0005525">
    <property type="term" value="F:GTP binding"/>
    <property type="evidence" value="ECO:0007669"/>
    <property type="project" value="UniProtKB-UniRule"/>
</dbReference>
<dbReference type="GO" id="GO:0003924">
    <property type="term" value="F:GTPase activity"/>
    <property type="evidence" value="ECO:0007669"/>
    <property type="project" value="InterPro"/>
</dbReference>
<dbReference type="GO" id="GO:0003746">
    <property type="term" value="F:translation elongation factor activity"/>
    <property type="evidence" value="ECO:0007669"/>
    <property type="project" value="UniProtKB-UniRule"/>
</dbReference>
<dbReference type="CDD" id="cd01884">
    <property type="entry name" value="EF_Tu"/>
    <property type="match status" value="1"/>
</dbReference>
<dbReference type="CDD" id="cd03697">
    <property type="entry name" value="EFTU_II"/>
    <property type="match status" value="1"/>
</dbReference>
<dbReference type="CDD" id="cd03707">
    <property type="entry name" value="EFTU_III"/>
    <property type="match status" value="1"/>
</dbReference>
<dbReference type="FunFam" id="2.40.30.10:FF:000001">
    <property type="entry name" value="Elongation factor Tu"/>
    <property type="match status" value="1"/>
</dbReference>
<dbReference type="FunFam" id="3.40.50.300:FF:000003">
    <property type="entry name" value="Elongation factor Tu"/>
    <property type="match status" value="1"/>
</dbReference>
<dbReference type="Gene3D" id="3.40.50.300">
    <property type="entry name" value="P-loop containing nucleotide triphosphate hydrolases"/>
    <property type="match status" value="1"/>
</dbReference>
<dbReference type="Gene3D" id="2.40.30.10">
    <property type="entry name" value="Translation factors"/>
    <property type="match status" value="2"/>
</dbReference>
<dbReference type="HAMAP" id="MF_00118_B">
    <property type="entry name" value="EF_Tu_B"/>
    <property type="match status" value="1"/>
</dbReference>
<dbReference type="InterPro" id="IPR041709">
    <property type="entry name" value="EF-Tu_GTP-bd"/>
</dbReference>
<dbReference type="InterPro" id="IPR050055">
    <property type="entry name" value="EF-Tu_GTPase"/>
</dbReference>
<dbReference type="InterPro" id="IPR004161">
    <property type="entry name" value="EFTu-like_2"/>
</dbReference>
<dbReference type="InterPro" id="IPR033720">
    <property type="entry name" value="EFTU_2"/>
</dbReference>
<dbReference type="InterPro" id="IPR031157">
    <property type="entry name" value="G_TR_CS"/>
</dbReference>
<dbReference type="InterPro" id="IPR027417">
    <property type="entry name" value="P-loop_NTPase"/>
</dbReference>
<dbReference type="InterPro" id="IPR005225">
    <property type="entry name" value="Small_GTP-bd"/>
</dbReference>
<dbReference type="InterPro" id="IPR000795">
    <property type="entry name" value="T_Tr_GTP-bd_dom"/>
</dbReference>
<dbReference type="InterPro" id="IPR009000">
    <property type="entry name" value="Transl_B-barrel_sf"/>
</dbReference>
<dbReference type="InterPro" id="IPR009001">
    <property type="entry name" value="Transl_elong_EF1A/Init_IF2_C"/>
</dbReference>
<dbReference type="InterPro" id="IPR004541">
    <property type="entry name" value="Transl_elong_EFTu/EF1A_bac/org"/>
</dbReference>
<dbReference type="InterPro" id="IPR004160">
    <property type="entry name" value="Transl_elong_EFTu/EF1A_C"/>
</dbReference>
<dbReference type="NCBIfam" id="TIGR00485">
    <property type="entry name" value="EF-Tu"/>
    <property type="match status" value="1"/>
</dbReference>
<dbReference type="NCBIfam" id="NF000766">
    <property type="entry name" value="PRK00049.1"/>
    <property type="match status" value="1"/>
</dbReference>
<dbReference type="NCBIfam" id="NF009372">
    <property type="entry name" value="PRK12735.1"/>
    <property type="match status" value="1"/>
</dbReference>
<dbReference type="NCBIfam" id="NF009373">
    <property type="entry name" value="PRK12736.1"/>
    <property type="match status" value="1"/>
</dbReference>
<dbReference type="NCBIfam" id="TIGR00231">
    <property type="entry name" value="small_GTP"/>
    <property type="match status" value="1"/>
</dbReference>
<dbReference type="PANTHER" id="PTHR43721:SF22">
    <property type="entry name" value="ELONGATION FACTOR TU, MITOCHONDRIAL"/>
    <property type="match status" value="1"/>
</dbReference>
<dbReference type="PANTHER" id="PTHR43721">
    <property type="entry name" value="ELONGATION FACTOR TU-RELATED"/>
    <property type="match status" value="1"/>
</dbReference>
<dbReference type="Pfam" id="PF00009">
    <property type="entry name" value="GTP_EFTU"/>
    <property type="match status" value="1"/>
</dbReference>
<dbReference type="Pfam" id="PF03144">
    <property type="entry name" value="GTP_EFTU_D2"/>
    <property type="match status" value="1"/>
</dbReference>
<dbReference type="Pfam" id="PF03143">
    <property type="entry name" value="GTP_EFTU_D3"/>
    <property type="match status" value="1"/>
</dbReference>
<dbReference type="PRINTS" id="PR00315">
    <property type="entry name" value="ELONGATNFCT"/>
</dbReference>
<dbReference type="SUPFAM" id="SSF50465">
    <property type="entry name" value="EF-Tu/eEF-1alpha/eIF2-gamma C-terminal domain"/>
    <property type="match status" value="1"/>
</dbReference>
<dbReference type="SUPFAM" id="SSF52540">
    <property type="entry name" value="P-loop containing nucleoside triphosphate hydrolases"/>
    <property type="match status" value="1"/>
</dbReference>
<dbReference type="SUPFAM" id="SSF50447">
    <property type="entry name" value="Translation proteins"/>
    <property type="match status" value="1"/>
</dbReference>
<dbReference type="PROSITE" id="PS00301">
    <property type="entry name" value="G_TR_1"/>
    <property type="match status" value="1"/>
</dbReference>
<dbReference type="PROSITE" id="PS51722">
    <property type="entry name" value="G_TR_2"/>
    <property type="match status" value="1"/>
</dbReference>